<accession>C1DC78</accession>
<proteinExistence type="inferred from homology"/>
<feature type="chain" id="PRO_1000164828" description="Uracil phosphoribosyltransferase">
    <location>
        <begin position="1"/>
        <end position="210"/>
    </location>
</feature>
<feature type="binding site" evidence="1">
    <location>
        <position position="78"/>
    </location>
    <ligand>
        <name>5-phospho-alpha-D-ribose 1-diphosphate</name>
        <dbReference type="ChEBI" id="CHEBI:58017"/>
    </ligand>
</feature>
<feature type="binding site" evidence="1">
    <location>
        <position position="103"/>
    </location>
    <ligand>
        <name>5-phospho-alpha-D-ribose 1-diphosphate</name>
        <dbReference type="ChEBI" id="CHEBI:58017"/>
    </ligand>
</feature>
<feature type="binding site" evidence="1">
    <location>
        <begin position="130"/>
        <end position="138"/>
    </location>
    <ligand>
        <name>5-phospho-alpha-D-ribose 1-diphosphate</name>
        <dbReference type="ChEBI" id="CHEBI:58017"/>
    </ligand>
</feature>
<feature type="binding site" evidence="1">
    <location>
        <position position="193"/>
    </location>
    <ligand>
        <name>uracil</name>
        <dbReference type="ChEBI" id="CHEBI:17568"/>
    </ligand>
</feature>
<feature type="binding site" evidence="1">
    <location>
        <begin position="198"/>
        <end position="200"/>
    </location>
    <ligand>
        <name>uracil</name>
        <dbReference type="ChEBI" id="CHEBI:17568"/>
    </ligand>
</feature>
<feature type="binding site" evidence="1">
    <location>
        <position position="199"/>
    </location>
    <ligand>
        <name>5-phospho-alpha-D-ribose 1-diphosphate</name>
        <dbReference type="ChEBI" id="CHEBI:58017"/>
    </ligand>
</feature>
<evidence type="ECO:0000255" key="1">
    <source>
        <dbReference type="HAMAP-Rule" id="MF_01218"/>
    </source>
</evidence>
<keyword id="KW-0021">Allosteric enzyme</keyword>
<keyword id="KW-0328">Glycosyltransferase</keyword>
<keyword id="KW-0342">GTP-binding</keyword>
<keyword id="KW-0460">Magnesium</keyword>
<keyword id="KW-0547">Nucleotide-binding</keyword>
<keyword id="KW-1185">Reference proteome</keyword>
<keyword id="KW-0808">Transferase</keyword>
<name>UPP_LARHH</name>
<dbReference type="EC" id="2.4.2.9" evidence="1"/>
<dbReference type="EMBL" id="CP001154">
    <property type="protein sequence ID" value="ACO73495.1"/>
    <property type="molecule type" value="Genomic_DNA"/>
</dbReference>
<dbReference type="RefSeq" id="WP_012695987.1">
    <property type="nucleotide sequence ID" value="NC_012559.1"/>
</dbReference>
<dbReference type="SMR" id="C1DC78"/>
<dbReference type="STRING" id="557598.LHK_00502"/>
<dbReference type="GeneID" id="75109345"/>
<dbReference type="KEGG" id="lhk:LHK_00502"/>
<dbReference type="eggNOG" id="COG0035">
    <property type="taxonomic scope" value="Bacteria"/>
</dbReference>
<dbReference type="HOGENOM" id="CLU_067096_2_2_4"/>
<dbReference type="UniPathway" id="UPA00574">
    <property type="reaction ID" value="UER00636"/>
</dbReference>
<dbReference type="Proteomes" id="UP000002010">
    <property type="component" value="Chromosome"/>
</dbReference>
<dbReference type="GO" id="GO:0005525">
    <property type="term" value="F:GTP binding"/>
    <property type="evidence" value="ECO:0007669"/>
    <property type="project" value="UniProtKB-KW"/>
</dbReference>
<dbReference type="GO" id="GO:0000287">
    <property type="term" value="F:magnesium ion binding"/>
    <property type="evidence" value="ECO:0007669"/>
    <property type="project" value="UniProtKB-UniRule"/>
</dbReference>
<dbReference type="GO" id="GO:0004845">
    <property type="term" value="F:uracil phosphoribosyltransferase activity"/>
    <property type="evidence" value="ECO:0007669"/>
    <property type="project" value="UniProtKB-UniRule"/>
</dbReference>
<dbReference type="GO" id="GO:0044206">
    <property type="term" value="P:UMP salvage"/>
    <property type="evidence" value="ECO:0007669"/>
    <property type="project" value="UniProtKB-UniRule"/>
</dbReference>
<dbReference type="GO" id="GO:0006223">
    <property type="term" value="P:uracil salvage"/>
    <property type="evidence" value="ECO:0007669"/>
    <property type="project" value="InterPro"/>
</dbReference>
<dbReference type="CDD" id="cd06223">
    <property type="entry name" value="PRTases_typeI"/>
    <property type="match status" value="1"/>
</dbReference>
<dbReference type="FunFam" id="3.40.50.2020:FF:000003">
    <property type="entry name" value="Uracil phosphoribosyltransferase"/>
    <property type="match status" value="1"/>
</dbReference>
<dbReference type="Gene3D" id="3.40.50.2020">
    <property type="match status" value="1"/>
</dbReference>
<dbReference type="HAMAP" id="MF_01218_B">
    <property type="entry name" value="Upp_B"/>
    <property type="match status" value="1"/>
</dbReference>
<dbReference type="InterPro" id="IPR000836">
    <property type="entry name" value="PRibTrfase_dom"/>
</dbReference>
<dbReference type="InterPro" id="IPR029057">
    <property type="entry name" value="PRTase-like"/>
</dbReference>
<dbReference type="InterPro" id="IPR034332">
    <property type="entry name" value="Upp_B"/>
</dbReference>
<dbReference type="InterPro" id="IPR050054">
    <property type="entry name" value="UPRTase/APRTase"/>
</dbReference>
<dbReference type="InterPro" id="IPR005765">
    <property type="entry name" value="Ura_phspho_trans"/>
</dbReference>
<dbReference type="NCBIfam" id="NF001097">
    <property type="entry name" value="PRK00129.1"/>
    <property type="match status" value="1"/>
</dbReference>
<dbReference type="NCBIfam" id="TIGR01091">
    <property type="entry name" value="upp"/>
    <property type="match status" value="1"/>
</dbReference>
<dbReference type="PANTHER" id="PTHR32315">
    <property type="entry name" value="ADENINE PHOSPHORIBOSYLTRANSFERASE"/>
    <property type="match status" value="1"/>
</dbReference>
<dbReference type="PANTHER" id="PTHR32315:SF4">
    <property type="entry name" value="URACIL PHOSPHORIBOSYLTRANSFERASE, CHLOROPLASTIC"/>
    <property type="match status" value="1"/>
</dbReference>
<dbReference type="Pfam" id="PF14681">
    <property type="entry name" value="UPRTase"/>
    <property type="match status" value="1"/>
</dbReference>
<dbReference type="SUPFAM" id="SSF53271">
    <property type="entry name" value="PRTase-like"/>
    <property type="match status" value="1"/>
</dbReference>
<comment type="function">
    <text evidence="1">Catalyzes the conversion of uracil and 5-phospho-alpha-D-ribose 1-diphosphate (PRPP) to UMP and diphosphate.</text>
</comment>
<comment type="catalytic activity">
    <reaction evidence="1">
        <text>UMP + diphosphate = 5-phospho-alpha-D-ribose 1-diphosphate + uracil</text>
        <dbReference type="Rhea" id="RHEA:13017"/>
        <dbReference type="ChEBI" id="CHEBI:17568"/>
        <dbReference type="ChEBI" id="CHEBI:33019"/>
        <dbReference type="ChEBI" id="CHEBI:57865"/>
        <dbReference type="ChEBI" id="CHEBI:58017"/>
        <dbReference type="EC" id="2.4.2.9"/>
    </reaction>
</comment>
<comment type="cofactor">
    <cofactor evidence="1">
        <name>Mg(2+)</name>
        <dbReference type="ChEBI" id="CHEBI:18420"/>
    </cofactor>
    <text evidence="1">Binds 1 Mg(2+) ion per subunit. The magnesium is bound as Mg-PRPP.</text>
</comment>
<comment type="activity regulation">
    <text evidence="1">Allosterically activated by GTP.</text>
</comment>
<comment type="pathway">
    <text evidence="1">Pyrimidine metabolism; UMP biosynthesis via salvage pathway; UMP from uracil: step 1/1.</text>
</comment>
<comment type="similarity">
    <text evidence="1">Belongs to the UPRTase family.</text>
</comment>
<sequence>MNLTVVNHPLVQHKLGLLREGDISTNKFRTITHELARLLAYEATRDFELEPITIDGWCGKIEVQQIKGKKVTVVPILRAGLGMLDGVLDLVPSAKISVVGLYRNEETLEPVPYFDKFVDSLDERIALIIDPMLATGGSMVATIDLLKRKGCKSIRAIVMVAAPEGIKVVNEAHPDVPVFTASLDSHLNEQGYIIPGLGDAGDKIFGTKHS</sequence>
<protein>
    <recommendedName>
        <fullName evidence="1">Uracil phosphoribosyltransferase</fullName>
        <ecNumber evidence="1">2.4.2.9</ecNumber>
    </recommendedName>
    <alternativeName>
        <fullName evidence="1">UMP pyrophosphorylase</fullName>
    </alternativeName>
    <alternativeName>
        <fullName evidence="1">UPRTase</fullName>
    </alternativeName>
</protein>
<organism>
    <name type="scientific">Laribacter hongkongensis (strain HLHK9)</name>
    <dbReference type="NCBI Taxonomy" id="557598"/>
    <lineage>
        <taxon>Bacteria</taxon>
        <taxon>Pseudomonadati</taxon>
        <taxon>Pseudomonadota</taxon>
        <taxon>Betaproteobacteria</taxon>
        <taxon>Neisseriales</taxon>
        <taxon>Aquaspirillaceae</taxon>
        <taxon>Laribacter</taxon>
    </lineage>
</organism>
<gene>
    <name evidence="1" type="primary">upp</name>
    <name type="ordered locus">LHK_00502</name>
</gene>
<reference key="1">
    <citation type="journal article" date="2009" name="PLoS Genet.">
        <title>The complete genome and proteome of Laribacter hongkongensis reveal potential mechanisms for adaptations to different temperatures and habitats.</title>
        <authorList>
            <person name="Woo P.C.Y."/>
            <person name="Lau S.K.P."/>
            <person name="Tse H."/>
            <person name="Teng J.L.L."/>
            <person name="Curreem S.O."/>
            <person name="Tsang A.K.L."/>
            <person name="Fan R.Y.Y."/>
            <person name="Wong G.K.M."/>
            <person name="Huang Y."/>
            <person name="Loman N.J."/>
            <person name="Snyder L.A.S."/>
            <person name="Cai J.J."/>
            <person name="Huang J.-D."/>
            <person name="Mak W."/>
            <person name="Pallen M.J."/>
            <person name="Lok S."/>
            <person name="Yuen K.-Y."/>
        </authorList>
    </citation>
    <scope>NUCLEOTIDE SEQUENCE [LARGE SCALE GENOMIC DNA]</scope>
    <source>
        <strain>HLHK9</strain>
    </source>
</reference>